<dbReference type="EMBL" id="L29771">
    <property type="protein sequence ID" value="AAB03359.1"/>
    <property type="molecule type" value="Genomic_DNA"/>
</dbReference>
<dbReference type="EMBL" id="D58401">
    <property type="protein sequence ID" value="BAA09568.1"/>
    <property type="molecule type" value="Genomic_DNA"/>
</dbReference>
<dbReference type="PIR" id="T09869">
    <property type="entry name" value="T09869"/>
</dbReference>
<dbReference type="RefSeq" id="NP_008302.1">
    <property type="nucleotide sequence ID" value="NC_001717.1"/>
</dbReference>
<dbReference type="SMR" id="P48173"/>
<dbReference type="GeneID" id="807981"/>
<dbReference type="KEGG" id="omy:807981"/>
<dbReference type="CTD" id="4519"/>
<dbReference type="OrthoDB" id="244at2759"/>
<dbReference type="Proteomes" id="UP000694395">
    <property type="component" value="Unplaced"/>
</dbReference>
<dbReference type="GO" id="GO:0005743">
    <property type="term" value="C:mitochondrial inner membrane"/>
    <property type="evidence" value="ECO:0007669"/>
    <property type="project" value="UniProtKB-SubCell"/>
</dbReference>
<dbReference type="GO" id="GO:0045275">
    <property type="term" value="C:respiratory chain complex III"/>
    <property type="evidence" value="ECO:0007669"/>
    <property type="project" value="InterPro"/>
</dbReference>
<dbReference type="GO" id="GO:0046872">
    <property type="term" value="F:metal ion binding"/>
    <property type="evidence" value="ECO:0007669"/>
    <property type="project" value="UniProtKB-KW"/>
</dbReference>
<dbReference type="GO" id="GO:0008121">
    <property type="term" value="F:ubiquinol-cytochrome-c reductase activity"/>
    <property type="evidence" value="ECO:0007669"/>
    <property type="project" value="InterPro"/>
</dbReference>
<dbReference type="GO" id="GO:0006122">
    <property type="term" value="P:mitochondrial electron transport, ubiquinol to cytochrome c"/>
    <property type="evidence" value="ECO:0007669"/>
    <property type="project" value="TreeGrafter"/>
</dbReference>
<dbReference type="CDD" id="cd00290">
    <property type="entry name" value="cytochrome_b_C"/>
    <property type="match status" value="1"/>
</dbReference>
<dbReference type="CDD" id="cd00284">
    <property type="entry name" value="Cytochrome_b_N"/>
    <property type="match status" value="1"/>
</dbReference>
<dbReference type="FunFam" id="1.20.810.10:FF:000002">
    <property type="entry name" value="Cytochrome b"/>
    <property type="match status" value="1"/>
</dbReference>
<dbReference type="Gene3D" id="1.20.810.10">
    <property type="entry name" value="Cytochrome Bc1 Complex, Chain C"/>
    <property type="match status" value="1"/>
</dbReference>
<dbReference type="InterPro" id="IPR005798">
    <property type="entry name" value="Cyt_b/b6_C"/>
</dbReference>
<dbReference type="InterPro" id="IPR036150">
    <property type="entry name" value="Cyt_b/b6_C_sf"/>
</dbReference>
<dbReference type="InterPro" id="IPR005797">
    <property type="entry name" value="Cyt_b/b6_N"/>
</dbReference>
<dbReference type="InterPro" id="IPR027387">
    <property type="entry name" value="Cytb/b6-like_sf"/>
</dbReference>
<dbReference type="InterPro" id="IPR030689">
    <property type="entry name" value="Cytochrome_b"/>
</dbReference>
<dbReference type="InterPro" id="IPR048260">
    <property type="entry name" value="Cytochrome_b_C_euk/bac"/>
</dbReference>
<dbReference type="InterPro" id="IPR048259">
    <property type="entry name" value="Cytochrome_b_N_euk/bac"/>
</dbReference>
<dbReference type="InterPro" id="IPR016174">
    <property type="entry name" value="Di-haem_cyt_TM"/>
</dbReference>
<dbReference type="PANTHER" id="PTHR19271">
    <property type="entry name" value="CYTOCHROME B"/>
    <property type="match status" value="1"/>
</dbReference>
<dbReference type="PANTHER" id="PTHR19271:SF16">
    <property type="entry name" value="CYTOCHROME B"/>
    <property type="match status" value="1"/>
</dbReference>
<dbReference type="Pfam" id="PF00032">
    <property type="entry name" value="Cytochrom_B_C"/>
    <property type="match status" value="1"/>
</dbReference>
<dbReference type="Pfam" id="PF00033">
    <property type="entry name" value="Cytochrome_B"/>
    <property type="match status" value="1"/>
</dbReference>
<dbReference type="PIRSF" id="PIRSF038885">
    <property type="entry name" value="COB"/>
    <property type="match status" value="1"/>
</dbReference>
<dbReference type="SUPFAM" id="SSF81648">
    <property type="entry name" value="a domain/subunit of cytochrome bc1 complex (Ubiquinol-cytochrome c reductase)"/>
    <property type="match status" value="1"/>
</dbReference>
<dbReference type="SUPFAM" id="SSF81342">
    <property type="entry name" value="Transmembrane di-heme cytochromes"/>
    <property type="match status" value="1"/>
</dbReference>
<dbReference type="PROSITE" id="PS51003">
    <property type="entry name" value="CYTB_CTER"/>
    <property type="match status" value="1"/>
</dbReference>
<dbReference type="PROSITE" id="PS51002">
    <property type="entry name" value="CYTB_NTER"/>
    <property type="match status" value="1"/>
</dbReference>
<accession>P48173</accession>
<protein>
    <recommendedName>
        <fullName>Cytochrome b</fullName>
    </recommendedName>
    <alternativeName>
        <fullName>Complex III subunit 3</fullName>
    </alternativeName>
    <alternativeName>
        <fullName>Complex III subunit III</fullName>
    </alternativeName>
    <alternativeName>
        <fullName>Cytochrome b-c1 complex subunit 3</fullName>
    </alternativeName>
    <alternativeName>
        <fullName>Ubiquinol-cytochrome-c reductase complex cytochrome b subunit</fullName>
    </alternativeName>
</protein>
<comment type="function">
    <text evidence="2">Component of the ubiquinol-cytochrome c reductase complex (complex III or cytochrome b-c1 complex) that is part of the mitochondrial respiratory chain. The b-c1 complex mediates electron transfer from ubiquinol to cytochrome c. Contributes to the generation of a proton gradient across the mitochondrial membrane that is then used for ATP synthesis.</text>
</comment>
<comment type="cofactor">
    <cofactor evidence="2">
        <name>heme b</name>
        <dbReference type="ChEBI" id="CHEBI:60344"/>
    </cofactor>
    <text evidence="2">Binds 2 heme b groups non-covalently.</text>
</comment>
<comment type="subunit">
    <text evidence="2">The cytochrome bc1 complex contains 3 respiratory subunits (MT-CYB, CYC1 and UQCRFS1), 2 core proteins (UQCRC1 and UQCRC2) and probably 6 low-molecular weight proteins.</text>
</comment>
<comment type="subcellular location">
    <subcellularLocation>
        <location evidence="2">Mitochondrion inner membrane</location>
        <topology evidence="2">Multi-pass membrane protein</topology>
    </subcellularLocation>
</comment>
<comment type="miscellaneous">
    <text evidence="1">Heme 1 (or BL or b562) is low-potential and absorbs at about 562 nm, and heme 2 (or BH or b566) is high-potential and absorbs at about 566 nm.</text>
</comment>
<comment type="similarity">
    <text evidence="3 4">Belongs to the cytochrome b family.</text>
</comment>
<comment type="caution">
    <text evidence="2">The full-length protein contains only eight transmembrane helices, not nine as predicted by bioinformatics tools.</text>
</comment>
<name>CYB_ONCMY</name>
<keyword id="KW-0249">Electron transport</keyword>
<keyword id="KW-0349">Heme</keyword>
<keyword id="KW-0408">Iron</keyword>
<keyword id="KW-0472">Membrane</keyword>
<keyword id="KW-0479">Metal-binding</keyword>
<keyword id="KW-0496">Mitochondrion</keyword>
<keyword id="KW-0999">Mitochondrion inner membrane</keyword>
<keyword id="KW-0679">Respiratory chain</keyword>
<keyword id="KW-0812">Transmembrane</keyword>
<keyword id="KW-1133">Transmembrane helix</keyword>
<keyword id="KW-0813">Transport</keyword>
<keyword id="KW-0830">Ubiquinone</keyword>
<proteinExistence type="inferred from homology"/>
<reference key="1">
    <citation type="journal article" date="1995" name="J. Mol. Evol.">
        <title>The complete nucleotide sequence of the mitochondrial DNA genome of the rainbow trout, Oncorhynchus mykiss.</title>
        <authorList>
            <person name="Zardoya R."/>
            <person name="Garrido-Pertierra A."/>
            <person name="Bautista J.M."/>
        </authorList>
    </citation>
    <scope>NUCLEOTIDE SEQUENCE [GENOMIC DNA]</scope>
    <source>
        <tissue>Liver</tissue>
    </source>
</reference>
<reference key="2">
    <citation type="submission" date="1995-09" db="EMBL/GenBank/DDBJ databases">
        <authorList>
            <person name="Matsuda M."/>
            <person name="Oshiro T."/>
            <person name="Kobayashi T."/>
            <person name="Ueshima R."/>
            <person name="Yonekawa H."/>
            <person name="Sakaizumi M."/>
        </authorList>
    </citation>
    <scope>NUCLEOTIDE SEQUENCE [GENOMIC DNA]</scope>
</reference>
<geneLocation type="mitochondrion"/>
<evidence type="ECO:0000250" key="1"/>
<evidence type="ECO:0000250" key="2">
    <source>
        <dbReference type="UniProtKB" id="P00157"/>
    </source>
</evidence>
<evidence type="ECO:0000255" key="3">
    <source>
        <dbReference type="PROSITE-ProRule" id="PRU00967"/>
    </source>
</evidence>
<evidence type="ECO:0000255" key="4">
    <source>
        <dbReference type="PROSITE-ProRule" id="PRU00968"/>
    </source>
</evidence>
<evidence type="ECO:0000305" key="5"/>
<gene>
    <name type="primary">mt-cyb</name>
    <name type="synonym">cob</name>
    <name type="synonym">cytb</name>
    <name type="synonym">mtcyb</name>
</gene>
<feature type="chain" id="PRO_0000061318" description="Cytochrome b">
    <location>
        <begin position="1"/>
        <end position="380"/>
    </location>
</feature>
<feature type="transmembrane region" description="Helical" evidence="2">
    <location>
        <begin position="33"/>
        <end position="53"/>
    </location>
</feature>
<feature type="transmembrane region" description="Helical" evidence="2">
    <location>
        <begin position="77"/>
        <end position="98"/>
    </location>
</feature>
<feature type="transmembrane region" description="Helical" evidence="2">
    <location>
        <begin position="113"/>
        <end position="133"/>
    </location>
</feature>
<feature type="transmembrane region" description="Helical" evidence="2">
    <location>
        <begin position="178"/>
        <end position="198"/>
    </location>
</feature>
<feature type="transmembrane region" description="Helical" evidence="2">
    <location>
        <begin position="226"/>
        <end position="246"/>
    </location>
</feature>
<feature type="transmembrane region" description="Helical" evidence="2">
    <location>
        <begin position="288"/>
        <end position="308"/>
    </location>
</feature>
<feature type="transmembrane region" description="Helical" evidence="2">
    <location>
        <begin position="320"/>
        <end position="340"/>
    </location>
</feature>
<feature type="transmembrane region" description="Helical" evidence="2">
    <location>
        <begin position="347"/>
        <end position="367"/>
    </location>
</feature>
<feature type="binding site" description="axial binding residue" evidence="2">
    <location>
        <position position="83"/>
    </location>
    <ligand>
        <name>heme b</name>
        <dbReference type="ChEBI" id="CHEBI:60344"/>
        <label>b562</label>
    </ligand>
    <ligandPart>
        <name>Fe</name>
        <dbReference type="ChEBI" id="CHEBI:18248"/>
    </ligandPart>
</feature>
<feature type="binding site" description="axial binding residue" evidence="2">
    <location>
        <position position="97"/>
    </location>
    <ligand>
        <name>heme b</name>
        <dbReference type="ChEBI" id="CHEBI:60344"/>
        <label>b566</label>
    </ligand>
    <ligandPart>
        <name>Fe</name>
        <dbReference type="ChEBI" id="CHEBI:18248"/>
    </ligandPart>
</feature>
<feature type="binding site" description="axial binding residue" evidence="2">
    <location>
        <position position="182"/>
    </location>
    <ligand>
        <name>heme b</name>
        <dbReference type="ChEBI" id="CHEBI:60344"/>
        <label>b562</label>
    </ligand>
    <ligandPart>
        <name>Fe</name>
        <dbReference type="ChEBI" id="CHEBI:18248"/>
    </ligandPart>
</feature>
<feature type="binding site" description="axial binding residue" evidence="2">
    <location>
        <position position="196"/>
    </location>
    <ligand>
        <name>heme b</name>
        <dbReference type="ChEBI" id="CHEBI:60344"/>
        <label>b566</label>
    </ligand>
    <ligandPart>
        <name>Fe</name>
        <dbReference type="ChEBI" id="CHEBI:18248"/>
    </ligandPart>
</feature>
<feature type="binding site" evidence="2">
    <location>
        <position position="201"/>
    </location>
    <ligand>
        <name>a ubiquinone</name>
        <dbReference type="ChEBI" id="CHEBI:16389"/>
    </ligand>
</feature>
<feature type="sequence conflict" description="In Ref. 2; BAA09568." evidence="5" ref="2">
    <original>I</original>
    <variation>N</variation>
    <location>
        <position position="374"/>
    </location>
</feature>
<organism>
    <name type="scientific">Oncorhynchus mykiss</name>
    <name type="common">Rainbow trout</name>
    <name type="synonym">Salmo gairdneri</name>
    <dbReference type="NCBI Taxonomy" id="8022"/>
    <lineage>
        <taxon>Eukaryota</taxon>
        <taxon>Metazoa</taxon>
        <taxon>Chordata</taxon>
        <taxon>Craniata</taxon>
        <taxon>Vertebrata</taxon>
        <taxon>Euteleostomi</taxon>
        <taxon>Actinopterygii</taxon>
        <taxon>Neopterygii</taxon>
        <taxon>Teleostei</taxon>
        <taxon>Protacanthopterygii</taxon>
        <taxon>Salmoniformes</taxon>
        <taxon>Salmonidae</taxon>
        <taxon>Salmoninae</taxon>
        <taxon>Oncorhynchus</taxon>
    </lineage>
</organism>
<sequence length="380" mass="42263">MANLRKTHPLLKIANDALVDLPAPSNISVWWNFGSLLGLCLATQILTGLFLAMHYTSDISTAFSSVCHICRDVSYGWLIRNIHANGASFFFICIYMHIARGLYYGSYLYKETWNIGVVLLLLTMMTAFVGYVLPWGQMSFWGATVITNLLSAVPYVGGALVQWIWGGFSVDNATLTRFFAFHFLFPFVIAAATVLHLLFLHETGSNNPAGINSDADKISFHPYFSYKDLLGFVAMLLGLTSLALFAPNLLGDPDNFTPANPLVTPPHIKPEWYFLFAYAILRSIPNKLGGVLALLFSILVLMVVPILHTSKQRGLTFRPLTQFLFWALVADMLILTWIGGMPVEHPFIIIGQVASVIYFTIFLVLSPLAGWAEIKALQWA</sequence>